<organism>
    <name type="scientific">Azotobacter vinelandii</name>
    <dbReference type="NCBI Taxonomy" id="354"/>
    <lineage>
        <taxon>Bacteria</taxon>
        <taxon>Pseudomonadati</taxon>
        <taxon>Pseudomonadota</taxon>
        <taxon>Gammaproteobacteria</taxon>
        <taxon>Pseudomonadales</taxon>
        <taxon>Pseudomonadaceae</taxon>
        <taxon>Azotobacter</taxon>
    </lineage>
</organism>
<proteinExistence type="predicted"/>
<evidence type="ECO:0000255" key="1">
    <source>
        <dbReference type="PROSITE-ProRule" id="PRU00193"/>
    </source>
</evidence>
<comment type="function">
    <text>AnfA is essential for nitrogen fixation under Mo- and V-deficient conditions. It is required for the regulation of nitrogenase 3 transcription. Interacts with sigma-54.</text>
</comment>
<name>ANFA_AZOVI</name>
<keyword id="KW-0010">Activator</keyword>
<keyword id="KW-0067">ATP-binding</keyword>
<keyword id="KW-0238">DNA-binding</keyword>
<keyword id="KW-0535">Nitrogen fixation</keyword>
<keyword id="KW-0547">Nucleotide-binding</keyword>
<keyword id="KW-0804">Transcription</keyword>
<keyword id="KW-0805">Transcription regulation</keyword>
<keyword id="KW-0902">Two-component regulatory system</keyword>
<accession>P12626</accession>
<protein>
    <recommendedName>
        <fullName>Nitrogen fixation protein AnfA</fullName>
    </recommendedName>
</protein>
<dbReference type="EMBL" id="M26751">
    <property type="protein sequence ID" value="AAA22146.1"/>
    <property type="molecule type" value="Genomic_DNA"/>
</dbReference>
<dbReference type="PIR" id="A44514">
    <property type="entry name" value="A44514"/>
</dbReference>
<dbReference type="SMR" id="P12626"/>
<dbReference type="GO" id="GO:0005524">
    <property type="term" value="F:ATP binding"/>
    <property type="evidence" value="ECO:0007669"/>
    <property type="project" value="UniProtKB-KW"/>
</dbReference>
<dbReference type="GO" id="GO:0016887">
    <property type="term" value="F:ATP hydrolysis activity"/>
    <property type="evidence" value="ECO:0007669"/>
    <property type="project" value="InterPro"/>
</dbReference>
<dbReference type="GO" id="GO:0043565">
    <property type="term" value="F:sequence-specific DNA binding"/>
    <property type="evidence" value="ECO:0007669"/>
    <property type="project" value="InterPro"/>
</dbReference>
<dbReference type="GO" id="GO:0009399">
    <property type="term" value="P:nitrogen fixation"/>
    <property type="evidence" value="ECO:0007669"/>
    <property type="project" value="UniProtKB-KW"/>
</dbReference>
<dbReference type="GO" id="GO:0000160">
    <property type="term" value="P:phosphorelay signal transduction system"/>
    <property type="evidence" value="ECO:0007669"/>
    <property type="project" value="UniProtKB-KW"/>
</dbReference>
<dbReference type="GO" id="GO:0006355">
    <property type="term" value="P:regulation of DNA-templated transcription"/>
    <property type="evidence" value="ECO:0007669"/>
    <property type="project" value="InterPro"/>
</dbReference>
<dbReference type="CDD" id="cd00009">
    <property type="entry name" value="AAA"/>
    <property type="match status" value="1"/>
</dbReference>
<dbReference type="FunFam" id="1.10.8.60:FF:000014">
    <property type="entry name" value="DNA-binding transcriptional regulator NtrC"/>
    <property type="match status" value="1"/>
</dbReference>
<dbReference type="FunFam" id="3.40.50.300:FF:000006">
    <property type="entry name" value="DNA-binding transcriptional regulator NtrC"/>
    <property type="match status" value="1"/>
</dbReference>
<dbReference type="Gene3D" id="1.10.8.60">
    <property type="match status" value="1"/>
</dbReference>
<dbReference type="Gene3D" id="3.30.450.40">
    <property type="match status" value="1"/>
</dbReference>
<dbReference type="Gene3D" id="1.10.10.60">
    <property type="entry name" value="Homeodomain-like"/>
    <property type="match status" value="1"/>
</dbReference>
<dbReference type="Gene3D" id="3.40.50.300">
    <property type="entry name" value="P-loop containing nucleotide triphosphate hydrolases"/>
    <property type="match status" value="1"/>
</dbReference>
<dbReference type="InterPro" id="IPR003593">
    <property type="entry name" value="AAA+_ATPase"/>
</dbReference>
<dbReference type="InterPro" id="IPR003018">
    <property type="entry name" value="GAF"/>
</dbReference>
<dbReference type="InterPro" id="IPR029016">
    <property type="entry name" value="GAF-like_dom_sf"/>
</dbReference>
<dbReference type="InterPro" id="IPR009057">
    <property type="entry name" value="Homeodomain-like_sf"/>
</dbReference>
<dbReference type="InterPro" id="IPR002197">
    <property type="entry name" value="HTH_Fis"/>
</dbReference>
<dbReference type="InterPro" id="IPR027417">
    <property type="entry name" value="P-loop_NTPase"/>
</dbReference>
<dbReference type="InterPro" id="IPR002078">
    <property type="entry name" value="Sigma_54_int"/>
</dbReference>
<dbReference type="InterPro" id="IPR025662">
    <property type="entry name" value="Sigma_54_int_dom_ATP-bd_1"/>
</dbReference>
<dbReference type="InterPro" id="IPR025943">
    <property type="entry name" value="Sigma_54_int_dom_ATP-bd_2"/>
</dbReference>
<dbReference type="InterPro" id="IPR025944">
    <property type="entry name" value="Sigma_54_int_dom_CS"/>
</dbReference>
<dbReference type="PANTHER" id="PTHR32071">
    <property type="entry name" value="TRANSCRIPTIONAL REGULATORY PROTEIN"/>
    <property type="match status" value="1"/>
</dbReference>
<dbReference type="Pfam" id="PF01590">
    <property type="entry name" value="GAF"/>
    <property type="match status" value="1"/>
</dbReference>
<dbReference type="Pfam" id="PF02954">
    <property type="entry name" value="HTH_8"/>
    <property type="match status" value="1"/>
</dbReference>
<dbReference type="Pfam" id="PF00158">
    <property type="entry name" value="Sigma54_activat"/>
    <property type="match status" value="1"/>
</dbReference>
<dbReference type="PRINTS" id="PR01590">
    <property type="entry name" value="HTHFIS"/>
</dbReference>
<dbReference type="SMART" id="SM00382">
    <property type="entry name" value="AAA"/>
    <property type="match status" value="1"/>
</dbReference>
<dbReference type="SMART" id="SM00065">
    <property type="entry name" value="GAF"/>
    <property type="match status" value="1"/>
</dbReference>
<dbReference type="SUPFAM" id="SSF55781">
    <property type="entry name" value="GAF domain-like"/>
    <property type="match status" value="1"/>
</dbReference>
<dbReference type="SUPFAM" id="SSF46689">
    <property type="entry name" value="Homeodomain-like"/>
    <property type="match status" value="1"/>
</dbReference>
<dbReference type="SUPFAM" id="SSF52540">
    <property type="entry name" value="P-loop containing nucleoside triphosphate hydrolases"/>
    <property type="match status" value="1"/>
</dbReference>
<dbReference type="PROSITE" id="PS00675">
    <property type="entry name" value="SIGMA54_INTERACT_1"/>
    <property type="match status" value="1"/>
</dbReference>
<dbReference type="PROSITE" id="PS00676">
    <property type="entry name" value="SIGMA54_INTERACT_2"/>
    <property type="match status" value="1"/>
</dbReference>
<dbReference type="PROSITE" id="PS00688">
    <property type="entry name" value="SIGMA54_INTERACT_3"/>
    <property type="match status" value="1"/>
</dbReference>
<dbReference type="PROSITE" id="PS50045">
    <property type="entry name" value="SIGMA54_INTERACT_4"/>
    <property type="match status" value="1"/>
</dbReference>
<feature type="chain" id="PRO_0000081316" description="Nitrogen fixation protein AnfA">
    <location>
        <begin position="1"/>
        <end position="533"/>
    </location>
</feature>
<feature type="domain" description="GAF">
    <location>
        <begin position="46"/>
        <end position="186"/>
    </location>
</feature>
<feature type="domain" description="Sigma-54 factor interaction" evidence="1">
    <location>
        <begin position="219"/>
        <end position="448"/>
    </location>
</feature>
<feature type="DNA-binding region" description="H-T-H motif">
    <location>
        <begin position="501"/>
        <end position="520"/>
    </location>
</feature>
<feature type="region of interest" description="A domain">
    <location>
        <begin position="33"/>
        <end position="193"/>
    </location>
</feature>
<feature type="binding site" evidence="1">
    <location>
        <begin position="247"/>
        <end position="254"/>
    </location>
    <ligand>
        <name>ATP</name>
        <dbReference type="ChEBI" id="CHEBI:30616"/>
    </ligand>
</feature>
<feature type="binding site" evidence="1">
    <location>
        <begin position="310"/>
        <end position="319"/>
    </location>
    <ligand>
        <name>ATP</name>
        <dbReference type="ChEBI" id="CHEBI:30616"/>
    </ligand>
</feature>
<gene>
    <name type="primary">anfA</name>
</gene>
<sequence>MSDQATFEFDTDYFVEEFSHCFTGECRVKMLPILYKISQIITGNADLADALSIVLGVMQQHLKMQRGIVTLYDMRAETIFIHDSFGLTEEEKKRGIYAVGEGITGKVVETGKAIVARRLQEHPDFLGRTRVSRNGKAKAAFFCVPIMRAQKVLGTIAAERVYMNPRLLKQDVELLTMIATMIAPLVELYLIENIERVRLENENRRLKHALKERFKPSNIIGNSKPMQEVYELIHKVASTKATVLILGESGVGKELVANAIHYNSPNAEAALVTSNCAPLPENLAESELFGHEKGSFTGALTMHKGCFEQADGGTIFLDEVGELSPTVQAKLVRVLQNRTFERVGGSKPVKVDVRIIAATNRNLVEMVEQGTFREDLYYRLNVFPITVPPLRERGSDVIALADHFVSAFSRENGKNVKRISTPALNMLMSYHWPGNVRELENVMERAVILSDDDVIHSYNLPPSLQTSKESGTAFGLTLEEKIKAVECEMIVEALKNSSGHIGEAAKELGLARRMLGVRMERYGISYKSFSRYA</sequence>
<reference key="1">
    <citation type="journal article" date="1989" name="J. Bacteriol.">
        <title>Two nifA-like genes required for expression of alternative nitrogenases by Azotobacter vinelandii.</title>
        <authorList>
            <person name="Joerger R.D."/>
            <person name="Jacobson M.R."/>
            <person name="Bishop P.E."/>
        </authorList>
    </citation>
    <scope>NUCLEOTIDE SEQUENCE [GENOMIC DNA]</scope>
</reference>